<protein>
    <recommendedName>
        <fullName evidence="1">DNA polymerase IV</fullName>
        <shortName evidence="1">Pol IV</shortName>
        <ecNumber evidence="1">2.7.7.7</ecNumber>
    </recommendedName>
</protein>
<keyword id="KW-0963">Cytoplasm</keyword>
<keyword id="KW-0227">DNA damage</keyword>
<keyword id="KW-0234">DNA repair</keyword>
<keyword id="KW-0235">DNA replication</keyword>
<keyword id="KW-0238">DNA-binding</keyword>
<keyword id="KW-0239">DNA-directed DNA polymerase</keyword>
<keyword id="KW-0460">Magnesium</keyword>
<keyword id="KW-0479">Metal-binding</keyword>
<keyword id="KW-0515">Mutator protein</keyword>
<keyword id="KW-0548">Nucleotidyltransferase</keyword>
<keyword id="KW-0808">Transferase</keyword>
<gene>
    <name evidence="1" type="primary">dinB</name>
    <name type="ordered locus">UPA3_0457</name>
</gene>
<feature type="chain" id="PRO_1000084966" description="DNA polymerase IV">
    <location>
        <begin position="1"/>
        <end position="360"/>
    </location>
</feature>
<feature type="domain" description="UmuC" evidence="1">
    <location>
        <begin position="9"/>
        <end position="191"/>
    </location>
</feature>
<feature type="active site" evidence="1">
    <location>
        <position position="109"/>
    </location>
</feature>
<feature type="binding site" evidence="1">
    <location>
        <position position="13"/>
    </location>
    <ligand>
        <name>Mg(2+)</name>
        <dbReference type="ChEBI" id="CHEBI:18420"/>
    </ligand>
</feature>
<feature type="binding site" evidence="1">
    <location>
        <position position="108"/>
    </location>
    <ligand>
        <name>Mg(2+)</name>
        <dbReference type="ChEBI" id="CHEBI:18420"/>
    </ligand>
</feature>
<feature type="site" description="Substrate discrimination" evidence="1">
    <location>
        <position position="18"/>
    </location>
</feature>
<comment type="function">
    <text evidence="1">Poorly processive, error-prone DNA polymerase involved in untargeted mutagenesis. Copies undamaged DNA at stalled replication forks, which arise in vivo from mismatched or misaligned primer ends. These misaligned primers can be extended by PolIV. Exhibits no 3'-5' exonuclease (proofreading) activity. May be involved in translesional synthesis, in conjunction with the beta clamp from PolIII.</text>
</comment>
<comment type="catalytic activity">
    <reaction evidence="1">
        <text>DNA(n) + a 2'-deoxyribonucleoside 5'-triphosphate = DNA(n+1) + diphosphate</text>
        <dbReference type="Rhea" id="RHEA:22508"/>
        <dbReference type="Rhea" id="RHEA-COMP:17339"/>
        <dbReference type="Rhea" id="RHEA-COMP:17340"/>
        <dbReference type="ChEBI" id="CHEBI:33019"/>
        <dbReference type="ChEBI" id="CHEBI:61560"/>
        <dbReference type="ChEBI" id="CHEBI:173112"/>
        <dbReference type="EC" id="2.7.7.7"/>
    </reaction>
</comment>
<comment type="cofactor">
    <cofactor evidence="1">
        <name>Mg(2+)</name>
        <dbReference type="ChEBI" id="CHEBI:18420"/>
    </cofactor>
    <text evidence="1">Binds 2 magnesium ions per subunit.</text>
</comment>
<comment type="subunit">
    <text evidence="1">Monomer.</text>
</comment>
<comment type="subcellular location">
    <subcellularLocation>
        <location evidence="1">Cytoplasm</location>
    </subcellularLocation>
</comment>
<comment type="similarity">
    <text evidence="1">Belongs to the DNA polymerase type-Y family.</text>
</comment>
<evidence type="ECO:0000255" key="1">
    <source>
        <dbReference type="HAMAP-Rule" id="MF_01113"/>
    </source>
</evidence>
<proteinExistence type="inferred from homology"/>
<name>DPO4_UREP2</name>
<dbReference type="EC" id="2.7.7.7" evidence="1"/>
<dbReference type="EMBL" id="CP000942">
    <property type="protein sequence ID" value="ACA33054.1"/>
    <property type="molecule type" value="Genomic_DNA"/>
</dbReference>
<dbReference type="RefSeq" id="WP_006689004.1">
    <property type="nucleotide sequence ID" value="NC_010503.1"/>
</dbReference>
<dbReference type="SMR" id="B1AJ79"/>
<dbReference type="GeneID" id="29672432"/>
<dbReference type="KEGG" id="upa:UPA3_0457"/>
<dbReference type="HOGENOM" id="CLU_012348_1_1_14"/>
<dbReference type="Proteomes" id="UP000002162">
    <property type="component" value="Chromosome"/>
</dbReference>
<dbReference type="GO" id="GO:0005829">
    <property type="term" value="C:cytosol"/>
    <property type="evidence" value="ECO:0007669"/>
    <property type="project" value="TreeGrafter"/>
</dbReference>
<dbReference type="GO" id="GO:0003684">
    <property type="term" value="F:damaged DNA binding"/>
    <property type="evidence" value="ECO:0007669"/>
    <property type="project" value="InterPro"/>
</dbReference>
<dbReference type="GO" id="GO:0003887">
    <property type="term" value="F:DNA-directed DNA polymerase activity"/>
    <property type="evidence" value="ECO:0007669"/>
    <property type="project" value="UniProtKB-UniRule"/>
</dbReference>
<dbReference type="GO" id="GO:0000287">
    <property type="term" value="F:magnesium ion binding"/>
    <property type="evidence" value="ECO:0007669"/>
    <property type="project" value="UniProtKB-UniRule"/>
</dbReference>
<dbReference type="GO" id="GO:0006261">
    <property type="term" value="P:DNA-templated DNA replication"/>
    <property type="evidence" value="ECO:0007669"/>
    <property type="project" value="UniProtKB-UniRule"/>
</dbReference>
<dbReference type="GO" id="GO:0042276">
    <property type="term" value="P:error-prone translesion synthesis"/>
    <property type="evidence" value="ECO:0007669"/>
    <property type="project" value="TreeGrafter"/>
</dbReference>
<dbReference type="GO" id="GO:0009432">
    <property type="term" value="P:SOS response"/>
    <property type="evidence" value="ECO:0007669"/>
    <property type="project" value="TreeGrafter"/>
</dbReference>
<dbReference type="CDD" id="cd03586">
    <property type="entry name" value="PolY_Pol_IV_kappa"/>
    <property type="match status" value="1"/>
</dbReference>
<dbReference type="Gene3D" id="3.30.70.270">
    <property type="match status" value="1"/>
</dbReference>
<dbReference type="Gene3D" id="3.40.1170.60">
    <property type="match status" value="1"/>
</dbReference>
<dbReference type="Gene3D" id="3.30.1490.100">
    <property type="entry name" value="DNA polymerase, Y-family, little finger domain"/>
    <property type="match status" value="1"/>
</dbReference>
<dbReference type="HAMAP" id="MF_01113">
    <property type="entry name" value="DNApol_IV"/>
    <property type="match status" value="1"/>
</dbReference>
<dbReference type="InterPro" id="IPR043502">
    <property type="entry name" value="DNA/RNA_pol_sf"/>
</dbReference>
<dbReference type="InterPro" id="IPR036775">
    <property type="entry name" value="DNA_pol_Y-fam_lit_finger_sf"/>
</dbReference>
<dbReference type="InterPro" id="IPR017961">
    <property type="entry name" value="DNA_pol_Y-fam_little_finger"/>
</dbReference>
<dbReference type="InterPro" id="IPR050116">
    <property type="entry name" value="DNA_polymerase-Y"/>
</dbReference>
<dbReference type="InterPro" id="IPR022880">
    <property type="entry name" value="DNApol_IV"/>
</dbReference>
<dbReference type="InterPro" id="IPR043128">
    <property type="entry name" value="Rev_trsase/Diguanyl_cyclase"/>
</dbReference>
<dbReference type="InterPro" id="IPR001126">
    <property type="entry name" value="UmuC"/>
</dbReference>
<dbReference type="NCBIfam" id="NF002677">
    <property type="entry name" value="PRK02406.1"/>
    <property type="match status" value="1"/>
</dbReference>
<dbReference type="PANTHER" id="PTHR11076:SF33">
    <property type="entry name" value="DNA POLYMERASE KAPPA"/>
    <property type="match status" value="1"/>
</dbReference>
<dbReference type="PANTHER" id="PTHR11076">
    <property type="entry name" value="DNA REPAIR POLYMERASE UMUC / TRANSFERASE FAMILY MEMBER"/>
    <property type="match status" value="1"/>
</dbReference>
<dbReference type="Pfam" id="PF00817">
    <property type="entry name" value="IMS"/>
    <property type="match status" value="1"/>
</dbReference>
<dbReference type="Pfam" id="PF11799">
    <property type="entry name" value="IMS_C"/>
    <property type="match status" value="1"/>
</dbReference>
<dbReference type="SUPFAM" id="SSF56672">
    <property type="entry name" value="DNA/RNA polymerases"/>
    <property type="match status" value="1"/>
</dbReference>
<dbReference type="SUPFAM" id="SSF100879">
    <property type="entry name" value="Lesion bypass DNA polymerase (Y-family), little finger domain"/>
    <property type="match status" value="1"/>
</dbReference>
<dbReference type="PROSITE" id="PS50173">
    <property type="entry name" value="UMUC"/>
    <property type="match status" value="1"/>
</dbReference>
<organism>
    <name type="scientific">Ureaplasma parvum serovar 3 (strain ATCC 27815 / 27 / NCTC 11736)</name>
    <dbReference type="NCBI Taxonomy" id="505682"/>
    <lineage>
        <taxon>Bacteria</taxon>
        <taxon>Bacillati</taxon>
        <taxon>Mycoplasmatota</taxon>
        <taxon>Mycoplasmoidales</taxon>
        <taxon>Mycoplasmoidaceae</taxon>
        <taxon>Ureaplasma</taxon>
    </lineage>
</organism>
<sequence length="360" mass="41723">MKNNHQKIIMHLDIDAFYATVSELLHPEYKNFPIAVGSLNSRTGIISSPNYLARSYGVKAAMPIFLAKELCPNLIILPSEHNIYQSYSKHFFQIINKYTNKIEITSIDECFIDATDLVKKYHNNIRLLATKIQKEIKNKLNLSISIGISYNKTIAKMATELNKPSGISIIDENKIINLIYELNINKIPYIGEIKSQELYAINIFKIKELIATENKQKISLVLGSIYQNLVNDLKGLSKIKIIDEDIYKTISHSKTFNEDLNDFYEISNEMNDLILTVTNRLKKCNLMTNNISIYIKYPSFKTKIKQKQLTYYTDDYQTIFLAIKNLFKIMYKDETIRLIGISLNKLVKKENVKKQLFLFD</sequence>
<reference key="1">
    <citation type="submission" date="2008-02" db="EMBL/GenBank/DDBJ databases">
        <title>Genome sequence of Ureaplasma parvum serovar 3.</title>
        <authorList>
            <person name="Methe B.A."/>
            <person name="Glass J."/>
            <person name="Waites K."/>
            <person name="Shrivastava S."/>
        </authorList>
    </citation>
    <scope>NUCLEOTIDE SEQUENCE [LARGE SCALE GENOMIC DNA]</scope>
    <source>
        <strain>ATCC 27815 / 27 / NCTC 11736</strain>
    </source>
</reference>
<accession>B1AJ79</accession>